<feature type="chain" id="PRO_0000334428" description="Na(+)/H(+) antiporter NhaA">
    <location>
        <begin position="1"/>
        <end position="391"/>
    </location>
</feature>
<feature type="transmembrane region" description="Helical" evidence="1">
    <location>
        <begin position="14"/>
        <end position="34"/>
    </location>
</feature>
<feature type="transmembrane region" description="Helical" evidence="1">
    <location>
        <begin position="59"/>
        <end position="79"/>
    </location>
</feature>
<feature type="transmembrane region" description="Helical" evidence="1">
    <location>
        <begin position="95"/>
        <end position="115"/>
    </location>
</feature>
<feature type="transmembrane region" description="Helical" evidence="1">
    <location>
        <begin position="124"/>
        <end position="144"/>
    </location>
</feature>
<feature type="transmembrane region" description="Helical" evidence="1">
    <location>
        <begin position="154"/>
        <end position="174"/>
    </location>
</feature>
<feature type="transmembrane region" description="Helical" evidence="1">
    <location>
        <begin position="177"/>
        <end position="197"/>
    </location>
</feature>
<feature type="transmembrane region" description="Helical" evidence="1">
    <location>
        <begin position="213"/>
        <end position="233"/>
    </location>
</feature>
<feature type="transmembrane region" description="Helical" evidence="1">
    <location>
        <begin position="261"/>
        <end position="281"/>
    </location>
</feature>
<feature type="transmembrane region" description="Helical" evidence="1">
    <location>
        <begin position="292"/>
        <end position="312"/>
    </location>
</feature>
<feature type="transmembrane region" description="Helical" evidence="1">
    <location>
        <begin position="331"/>
        <end position="351"/>
    </location>
</feature>
<feature type="transmembrane region" description="Helical" evidence="1">
    <location>
        <begin position="363"/>
        <end position="383"/>
    </location>
</feature>
<accession>A8H1B5</accession>
<evidence type="ECO:0000255" key="1">
    <source>
        <dbReference type="HAMAP-Rule" id="MF_01844"/>
    </source>
</evidence>
<sequence>MERAIRNFLSQESAGGILLMVSVVLAMILANSPLSGMYHGFLETEMQVRVGNLDIDKTLIHWINDGLMAIFFMLIGLEVKRELLEGALSSRAQASLPTFAAIGGMVFPAAVYLIFNYSDPITQVGWAIPAATDIAFALGIMALLGSRVPVALKVFLLALAIIDDLGVVVIIALFYSTDLSTISLIIAAAAILGLIGLNRKGVTSLAPYGVVGLILWIAVLKSGVHATLAGVIIAFCIPLRAKDGSSPSESLEHSLHPWSTFIILPIFAFANAGVDLSGMSLSSLLSPVPLGIALGLLVGKPLGIMLFSYIAVKLKLAVLPEGMGWRHITPVAVMCGIGFTMSMFISSLAFVGEGQMYGDYARLGILLGSIASATIGYFWLSKVLPEKGAKA</sequence>
<reference key="1">
    <citation type="submission" date="2007-10" db="EMBL/GenBank/DDBJ databases">
        <title>Complete sequence of Shewanella pealeana ATCC 700345.</title>
        <authorList>
            <consortium name="US DOE Joint Genome Institute"/>
            <person name="Copeland A."/>
            <person name="Lucas S."/>
            <person name="Lapidus A."/>
            <person name="Barry K."/>
            <person name="Glavina del Rio T."/>
            <person name="Dalin E."/>
            <person name="Tice H."/>
            <person name="Pitluck S."/>
            <person name="Chertkov O."/>
            <person name="Brettin T."/>
            <person name="Bruce D."/>
            <person name="Detter J.C."/>
            <person name="Han C."/>
            <person name="Schmutz J."/>
            <person name="Larimer F."/>
            <person name="Land M."/>
            <person name="Hauser L."/>
            <person name="Kyrpides N."/>
            <person name="Kim E."/>
            <person name="Zhao J.-S.Z."/>
            <person name="Manno D."/>
            <person name="Hawari J."/>
            <person name="Richardson P."/>
        </authorList>
    </citation>
    <scope>NUCLEOTIDE SEQUENCE [LARGE SCALE GENOMIC DNA]</scope>
    <source>
        <strain>ATCC 700345 / ANG-SQ1</strain>
    </source>
</reference>
<keyword id="KW-0050">Antiport</keyword>
<keyword id="KW-0997">Cell inner membrane</keyword>
<keyword id="KW-1003">Cell membrane</keyword>
<keyword id="KW-0406">Ion transport</keyword>
<keyword id="KW-0472">Membrane</keyword>
<keyword id="KW-1185">Reference proteome</keyword>
<keyword id="KW-0915">Sodium</keyword>
<keyword id="KW-0739">Sodium transport</keyword>
<keyword id="KW-0812">Transmembrane</keyword>
<keyword id="KW-1133">Transmembrane helix</keyword>
<keyword id="KW-0813">Transport</keyword>
<protein>
    <recommendedName>
        <fullName evidence="1">Na(+)/H(+) antiporter NhaA</fullName>
    </recommendedName>
    <alternativeName>
        <fullName evidence="1">Sodium/proton antiporter NhaA</fullName>
    </alternativeName>
</protein>
<gene>
    <name evidence="1" type="primary">nhaA</name>
    <name type="ordered locus">Spea_1025</name>
</gene>
<dbReference type="EMBL" id="CP000851">
    <property type="protein sequence ID" value="ABV86352.1"/>
    <property type="molecule type" value="Genomic_DNA"/>
</dbReference>
<dbReference type="RefSeq" id="WP_012154283.1">
    <property type="nucleotide sequence ID" value="NC_009901.1"/>
</dbReference>
<dbReference type="SMR" id="A8H1B5"/>
<dbReference type="STRING" id="398579.Spea_1025"/>
<dbReference type="KEGG" id="spl:Spea_1025"/>
<dbReference type="eggNOG" id="COG3004">
    <property type="taxonomic scope" value="Bacteria"/>
</dbReference>
<dbReference type="HOGENOM" id="CLU_015803_1_0_6"/>
<dbReference type="OrthoDB" id="9808135at2"/>
<dbReference type="Proteomes" id="UP000002608">
    <property type="component" value="Chromosome"/>
</dbReference>
<dbReference type="GO" id="GO:0005886">
    <property type="term" value="C:plasma membrane"/>
    <property type="evidence" value="ECO:0007669"/>
    <property type="project" value="UniProtKB-SubCell"/>
</dbReference>
<dbReference type="GO" id="GO:0015385">
    <property type="term" value="F:sodium:proton antiporter activity"/>
    <property type="evidence" value="ECO:0007669"/>
    <property type="project" value="TreeGrafter"/>
</dbReference>
<dbReference type="GO" id="GO:0006885">
    <property type="term" value="P:regulation of pH"/>
    <property type="evidence" value="ECO:0007669"/>
    <property type="project" value="InterPro"/>
</dbReference>
<dbReference type="Gene3D" id="1.20.1530.10">
    <property type="entry name" value="Na+/H+ antiporter like domain"/>
    <property type="match status" value="1"/>
</dbReference>
<dbReference type="HAMAP" id="MF_01844">
    <property type="entry name" value="NhaA"/>
    <property type="match status" value="1"/>
</dbReference>
<dbReference type="InterPro" id="IPR023171">
    <property type="entry name" value="Na/H_antiporter_dom_sf"/>
</dbReference>
<dbReference type="InterPro" id="IPR004670">
    <property type="entry name" value="NhaA"/>
</dbReference>
<dbReference type="NCBIfam" id="TIGR00773">
    <property type="entry name" value="NhaA"/>
    <property type="match status" value="1"/>
</dbReference>
<dbReference type="NCBIfam" id="NF007111">
    <property type="entry name" value="PRK09560.1"/>
    <property type="match status" value="1"/>
</dbReference>
<dbReference type="NCBIfam" id="NF007112">
    <property type="entry name" value="PRK09561.1"/>
    <property type="match status" value="1"/>
</dbReference>
<dbReference type="PANTHER" id="PTHR30341:SF0">
    <property type="entry name" value="NA(+)_H(+) ANTIPORTER NHAA"/>
    <property type="match status" value="1"/>
</dbReference>
<dbReference type="PANTHER" id="PTHR30341">
    <property type="entry name" value="SODIUM ION/PROTON ANTIPORTER NHAA-RELATED"/>
    <property type="match status" value="1"/>
</dbReference>
<dbReference type="Pfam" id="PF06965">
    <property type="entry name" value="Na_H_antiport_1"/>
    <property type="match status" value="1"/>
</dbReference>
<organism>
    <name type="scientific">Shewanella pealeana (strain ATCC 700345 / ANG-SQ1)</name>
    <dbReference type="NCBI Taxonomy" id="398579"/>
    <lineage>
        <taxon>Bacteria</taxon>
        <taxon>Pseudomonadati</taxon>
        <taxon>Pseudomonadota</taxon>
        <taxon>Gammaproteobacteria</taxon>
        <taxon>Alteromonadales</taxon>
        <taxon>Shewanellaceae</taxon>
        <taxon>Shewanella</taxon>
    </lineage>
</organism>
<comment type="function">
    <text evidence="1">Na(+)/H(+) antiporter that extrudes sodium in exchange for external protons.</text>
</comment>
<comment type="catalytic activity">
    <reaction evidence="1">
        <text>Na(+)(in) + 2 H(+)(out) = Na(+)(out) + 2 H(+)(in)</text>
        <dbReference type="Rhea" id="RHEA:29251"/>
        <dbReference type="ChEBI" id="CHEBI:15378"/>
        <dbReference type="ChEBI" id="CHEBI:29101"/>
    </reaction>
    <physiologicalReaction direction="left-to-right" evidence="1">
        <dbReference type="Rhea" id="RHEA:29252"/>
    </physiologicalReaction>
</comment>
<comment type="subcellular location">
    <subcellularLocation>
        <location evidence="1">Cell inner membrane</location>
        <topology evidence="1">Multi-pass membrane protein</topology>
    </subcellularLocation>
</comment>
<comment type="similarity">
    <text evidence="1">Belongs to the NhaA Na(+)/H(+) (TC 2.A.33) antiporter family.</text>
</comment>
<proteinExistence type="inferred from homology"/>
<name>NHAA_SHEPA</name>